<organism>
    <name type="scientific">Listeria welshimeri serovar 6b (strain ATCC 35897 / DSM 20650 / CCUG 15529 / CIP 8149 / NCTC 11857 / SLCC 5334 / V8)</name>
    <dbReference type="NCBI Taxonomy" id="386043"/>
    <lineage>
        <taxon>Bacteria</taxon>
        <taxon>Bacillati</taxon>
        <taxon>Bacillota</taxon>
        <taxon>Bacilli</taxon>
        <taxon>Bacillales</taxon>
        <taxon>Listeriaceae</taxon>
        <taxon>Listeria</taxon>
    </lineage>
</organism>
<proteinExistence type="inferred from homology"/>
<comment type="similarity">
    <text evidence="1">Belongs to the UPF0145 family.</text>
</comment>
<accession>A0AF06</accession>
<name>Y170_LISW6</name>
<feature type="chain" id="PRO_1000013013" description="UPF0145 protein lwe0170">
    <location>
        <begin position="1"/>
        <end position="110"/>
    </location>
</feature>
<evidence type="ECO:0000255" key="1">
    <source>
        <dbReference type="HAMAP-Rule" id="MF_00338"/>
    </source>
</evidence>
<gene>
    <name type="ordered locus">lwe0170</name>
</gene>
<dbReference type="EMBL" id="AM263198">
    <property type="protein sequence ID" value="CAK19588.1"/>
    <property type="molecule type" value="Genomic_DNA"/>
</dbReference>
<dbReference type="RefSeq" id="WP_011701036.1">
    <property type="nucleotide sequence ID" value="NC_008555.1"/>
</dbReference>
<dbReference type="SMR" id="A0AF06"/>
<dbReference type="STRING" id="386043.lwe0170"/>
<dbReference type="GeneID" id="61188050"/>
<dbReference type="KEGG" id="lwe:lwe0170"/>
<dbReference type="eggNOG" id="COG0393">
    <property type="taxonomic scope" value="Bacteria"/>
</dbReference>
<dbReference type="HOGENOM" id="CLU_117144_3_1_9"/>
<dbReference type="OrthoDB" id="9796448at2"/>
<dbReference type="Proteomes" id="UP000000779">
    <property type="component" value="Chromosome"/>
</dbReference>
<dbReference type="Gene3D" id="3.30.110.70">
    <property type="entry name" value="Hypothetical protein apc22750. Chain B"/>
    <property type="match status" value="1"/>
</dbReference>
<dbReference type="HAMAP" id="MF_00338">
    <property type="entry name" value="UPF0145"/>
    <property type="match status" value="1"/>
</dbReference>
<dbReference type="InterPro" id="IPR035439">
    <property type="entry name" value="UPF0145_dom_sf"/>
</dbReference>
<dbReference type="InterPro" id="IPR002765">
    <property type="entry name" value="UPF0145_YbjQ-like"/>
</dbReference>
<dbReference type="NCBIfam" id="NF002224">
    <property type="entry name" value="PRK01119.1"/>
    <property type="match status" value="1"/>
</dbReference>
<dbReference type="PANTHER" id="PTHR34068">
    <property type="entry name" value="UPF0145 PROTEIN YBJQ"/>
    <property type="match status" value="1"/>
</dbReference>
<dbReference type="PANTHER" id="PTHR34068:SF1">
    <property type="entry name" value="UPF0145 PROTEIN YBJQ"/>
    <property type="match status" value="1"/>
</dbReference>
<dbReference type="Pfam" id="PF01906">
    <property type="entry name" value="YbjQ_1"/>
    <property type="match status" value="1"/>
</dbReference>
<dbReference type="SUPFAM" id="SSF117782">
    <property type="entry name" value="YbjQ-like"/>
    <property type="match status" value="1"/>
</dbReference>
<reference key="1">
    <citation type="journal article" date="2006" name="J. Bacteriol.">
        <title>Whole-genome sequence of Listeria welshimeri reveals common steps in genome reduction with Listeria innocua as compared to Listeria monocytogenes.</title>
        <authorList>
            <person name="Hain T."/>
            <person name="Steinweg C."/>
            <person name="Kuenne C.T."/>
            <person name="Billion A."/>
            <person name="Ghai R."/>
            <person name="Chatterjee S.S."/>
            <person name="Domann E."/>
            <person name="Kaerst U."/>
            <person name="Goesmann A."/>
            <person name="Bekel T."/>
            <person name="Bartels D."/>
            <person name="Kaiser O."/>
            <person name="Meyer F."/>
            <person name="Puehler A."/>
            <person name="Weisshaar B."/>
            <person name="Wehland J."/>
            <person name="Liang C."/>
            <person name="Dandekar T."/>
            <person name="Lampidis R."/>
            <person name="Kreft J."/>
            <person name="Goebel W."/>
            <person name="Chakraborty T."/>
        </authorList>
    </citation>
    <scope>NUCLEOTIDE SEQUENCE [LARGE SCALE GENOMIC DNA]</scope>
    <source>
        <strain>ATCC 35897 / DSM 20650 / CCUG 15529 / CIP 8149 / NCTC 11857 / SLCC 5334 / V8</strain>
    </source>
</reference>
<protein>
    <recommendedName>
        <fullName evidence="1">UPF0145 protein lwe0170</fullName>
    </recommendedName>
</protein>
<sequence length="110" mass="11979">MIVTTSPNIEGKQIIEYKKIVFGEVITGVNFMKDIGAGLRNFFGGRSQGYEDELINAREEAIREMESRAKDIGANAVIGVDIDYEVLGADNGMLMVTASGTAVVIEVQDY</sequence>